<organism>
    <name type="scientific">Oryza sativa subsp. japonica</name>
    <name type="common">Rice</name>
    <dbReference type="NCBI Taxonomy" id="39947"/>
    <lineage>
        <taxon>Eukaryota</taxon>
        <taxon>Viridiplantae</taxon>
        <taxon>Streptophyta</taxon>
        <taxon>Embryophyta</taxon>
        <taxon>Tracheophyta</taxon>
        <taxon>Spermatophyta</taxon>
        <taxon>Magnoliopsida</taxon>
        <taxon>Liliopsida</taxon>
        <taxon>Poales</taxon>
        <taxon>Poaceae</taxon>
        <taxon>BOP clade</taxon>
        <taxon>Oryzoideae</taxon>
        <taxon>Oryzeae</taxon>
        <taxon>Oryzinae</taxon>
        <taxon>Oryza</taxon>
        <taxon>Oryza sativa</taxon>
    </lineage>
</organism>
<sequence>MSKLRWLIMAFLVCLLLLTPKDLEGLQLVGAIRNHLFWSTSSPLHHLPDLLEEESVQVNEMELWGDDDGRRRMMGEEVRRQAGAGRMSEVKMGGDRPLVAVIKKEKHGAKKKKDDDSSGMVVVGLSAACVALVTLVGICFCACRDSESSSSPYDLRDEKPLLSLNLSDGPSRKSCATTIDVSRLGALTAECEQHLHGGAGAGDHNTTNYNLRKPAGVGSMSMNKVSMQSQAMRMSSHEITTIAGAGRVENKVSTIAPSAAAAAVASAGGGQVPAAPPPPAGPPPPAPPPLPPSHHHHHGHHPPPPHPLPPGAGAGAGTGAPPPPPAHPAAPAPPPPAPSPSAAGAGSGPPPPPPPAAPAAPRPPGPGPGPPPPPGAAGRGGGGPPPPALPGGPRARGPPPFKKSPGAAAAAAQADPNKAKLKPFFWDKVTANPNQAMVWDQIKAGSFQFNEEMIESLFGAQSTEKKSTDAKKESGKEATQFVRILDPKKAQNLAISLKALSVSAEQVRAAVMEGHDLPPDLIQTLVRWSPTSDEELRLRLYAGEPAQLGPAEQFMRAIIDVPYLYQRLDALLFMAALPEEAAAVEQSFATLEVACEELRGSRLFKKLLEAVLKTGNRMNDGTFRGGAQAFKLDTLLKLADVKGVDGKTTLLHFVVQEIIRSEGVRAARAASGGGGGSSISSISSSDDLILLQSQSSIGSNSGRSSVDASSLEQEQDETERYRQLGLGVVSSLGDDLQNVRKAASFDADALTITVASLGHRLVKANEFLSTGMRSLEEDSGFQRRLASFVQQSQEQVTRLLEDEKRLRSLVRATVDYFHGSTGKDEGLRLFVVVRDFLGILDKVCREVKEQAAANAKAKKQQQPTPAPRSRQSSQSSFRDPRQQIQDRRAAALSRNNSSSSSSDSDD</sequence>
<reference key="1">
    <citation type="journal article" date="2002" name="Nature">
        <title>Sequence and analysis of rice chromosome 4.</title>
        <authorList>
            <person name="Feng Q."/>
            <person name="Zhang Y."/>
            <person name="Hao P."/>
            <person name="Wang S."/>
            <person name="Fu G."/>
            <person name="Huang Y."/>
            <person name="Li Y."/>
            <person name="Zhu J."/>
            <person name="Liu Y."/>
            <person name="Hu X."/>
            <person name="Jia P."/>
            <person name="Zhang Y."/>
            <person name="Zhao Q."/>
            <person name="Ying K."/>
            <person name="Yu S."/>
            <person name="Tang Y."/>
            <person name="Weng Q."/>
            <person name="Zhang L."/>
            <person name="Lu Y."/>
            <person name="Mu J."/>
            <person name="Lu Y."/>
            <person name="Zhang L.S."/>
            <person name="Yu Z."/>
            <person name="Fan D."/>
            <person name="Liu X."/>
            <person name="Lu T."/>
            <person name="Li C."/>
            <person name="Wu Y."/>
            <person name="Sun T."/>
            <person name="Lei H."/>
            <person name="Li T."/>
            <person name="Hu H."/>
            <person name="Guan J."/>
            <person name="Wu M."/>
            <person name="Zhang R."/>
            <person name="Zhou B."/>
            <person name="Chen Z."/>
            <person name="Chen L."/>
            <person name="Jin Z."/>
            <person name="Wang R."/>
            <person name="Yin H."/>
            <person name="Cai Z."/>
            <person name="Ren S."/>
            <person name="Lv G."/>
            <person name="Gu W."/>
            <person name="Zhu G."/>
            <person name="Tu Y."/>
            <person name="Jia J."/>
            <person name="Zhang Y."/>
            <person name="Chen J."/>
            <person name="Kang H."/>
            <person name="Chen X."/>
            <person name="Shao C."/>
            <person name="Sun Y."/>
            <person name="Hu Q."/>
            <person name="Zhang X."/>
            <person name="Zhang W."/>
            <person name="Wang L."/>
            <person name="Ding C."/>
            <person name="Sheng H."/>
            <person name="Gu J."/>
            <person name="Chen S."/>
            <person name="Ni L."/>
            <person name="Zhu F."/>
            <person name="Chen W."/>
            <person name="Lan L."/>
            <person name="Lai Y."/>
            <person name="Cheng Z."/>
            <person name="Gu M."/>
            <person name="Jiang J."/>
            <person name="Li J."/>
            <person name="Hong G."/>
            <person name="Xue Y."/>
            <person name="Han B."/>
        </authorList>
    </citation>
    <scope>NUCLEOTIDE SEQUENCE [LARGE SCALE GENOMIC DNA]</scope>
    <source>
        <strain>cv. Nipponbare</strain>
    </source>
</reference>
<reference key="2">
    <citation type="journal article" date="2005" name="Nature">
        <title>The map-based sequence of the rice genome.</title>
        <authorList>
            <consortium name="International rice genome sequencing project (IRGSP)"/>
        </authorList>
    </citation>
    <scope>NUCLEOTIDE SEQUENCE [LARGE SCALE GENOMIC DNA]</scope>
    <source>
        <strain>cv. Nipponbare</strain>
    </source>
</reference>
<reference key="3">
    <citation type="journal article" date="2008" name="Nucleic Acids Res.">
        <title>The rice annotation project database (RAP-DB): 2008 update.</title>
        <authorList>
            <consortium name="The rice annotation project (RAP)"/>
        </authorList>
    </citation>
    <scope>GENOME REANNOTATION</scope>
    <source>
        <strain>cv. Nipponbare</strain>
    </source>
</reference>
<reference key="4">
    <citation type="journal article" date="2013" name="Rice">
        <title>Improvement of the Oryza sativa Nipponbare reference genome using next generation sequence and optical map data.</title>
        <authorList>
            <person name="Kawahara Y."/>
            <person name="de la Bastide M."/>
            <person name="Hamilton J.P."/>
            <person name="Kanamori H."/>
            <person name="McCombie W.R."/>
            <person name="Ouyang S."/>
            <person name="Schwartz D.C."/>
            <person name="Tanaka T."/>
            <person name="Wu J."/>
            <person name="Zhou S."/>
            <person name="Childs K.L."/>
            <person name="Davidson R.M."/>
            <person name="Lin H."/>
            <person name="Quesada-Ocampo L."/>
            <person name="Vaillancourt B."/>
            <person name="Sakai H."/>
            <person name="Lee S.S."/>
            <person name="Kim J."/>
            <person name="Numa H."/>
            <person name="Itoh T."/>
            <person name="Buell C.R."/>
            <person name="Matsumoto T."/>
        </authorList>
    </citation>
    <scope>GENOME REANNOTATION</scope>
    <source>
        <strain>cv. Nipponbare</strain>
    </source>
</reference>
<reference key="5">
    <citation type="journal article" date="2004" name="BMC Genomics">
        <title>Formin homology 2 domains occur in multiple contexts in angiosperms.</title>
        <authorList>
            <person name="Cvrckova F."/>
            <person name="Novotny M."/>
            <person name="Pickova D."/>
            <person name="Zarsky V."/>
        </authorList>
    </citation>
    <scope>GENE FAMILY</scope>
    <scope>NOMENCLATURE</scope>
</reference>
<keyword id="KW-0472">Membrane</keyword>
<keyword id="KW-1185">Reference proteome</keyword>
<keyword id="KW-0732">Signal</keyword>
<keyword id="KW-0812">Transmembrane</keyword>
<keyword id="KW-1133">Transmembrane helix</keyword>
<dbReference type="EMBL" id="BX842604">
    <property type="protein sequence ID" value="CAE75976.1"/>
    <property type="molecule type" value="Genomic_DNA"/>
</dbReference>
<dbReference type="EMBL" id="AP008210">
    <property type="protein sequence ID" value="BAF13902.2"/>
    <property type="status" value="ALT_SEQ"/>
    <property type="molecule type" value="Genomic_DNA"/>
</dbReference>
<dbReference type="EMBL" id="AP014960">
    <property type="status" value="NOT_ANNOTATED_CDS"/>
    <property type="molecule type" value="Genomic_DNA"/>
</dbReference>
<dbReference type="RefSeq" id="XP_015635151.1">
    <property type="nucleotide sequence ID" value="XM_015779665.1"/>
</dbReference>
<dbReference type="SMR" id="Q6MWG9"/>
<dbReference type="FunCoup" id="Q6MWG9">
    <property type="interactions" value="38"/>
</dbReference>
<dbReference type="STRING" id="39947.Q6MWG9"/>
<dbReference type="PaxDb" id="39947-Q6MWG9"/>
<dbReference type="KEGG" id="dosa:Os04g0100300"/>
<dbReference type="eggNOG" id="KOG1922">
    <property type="taxonomic scope" value="Eukaryota"/>
</dbReference>
<dbReference type="HOGENOM" id="CLU_007699_1_0_1"/>
<dbReference type="InParanoid" id="Q6MWG9"/>
<dbReference type="OrthoDB" id="1668162at2759"/>
<dbReference type="Proteomes" id="UP000000763">
    <property type="component" value="Chromosome 4"/>
</dbReference>
<dbReference type="Proteomes" id="UP000059680">
    <property type="component" value="Chromosome 4"/>
</dbReference>
<dbReference type="GO" id="GO:0005856">
    <property type="term" value="C:cytoskeleton"/>
    <property type="evidence" value="ECO:0000318"/>
    <property type="project" value="GO_Central"/>
</dbReference>
<dbReference type="GO" id="GO:0016020">
    <property type="term" value="C:membrane"/>
    <property type="evidence" value="ECO:0007669"/>
    <property type="project" value="UniProtKB-SubCell"/>
</dbReference>
<dbReference type="GO" id="GO:0051015">
    <property type="term" value="F:actin filament binding"/>
    <property type="evidence" value="ECO:0000318"/>
    <property type="project" value="GO_Central"/>
</dbReference>
<dbReference type="GO" id="GO:0030036">
    <property type="term" value="P:actin cytoskeleton organization"/>
    <property type="evidence" value="ECO:0000318"/>
    <property type="project" value="GO_Central"/>
</dbReference>
<dbReference type="GO" id="GO:0045010">
    <property type="term" value="P:actin nucleation"/>
    <property type="evidence" value="ECO:0007669"/>
    <property type="project" value="InterPro"/>
</dbReference>
<dbReference type="Gene3D" id="1.20.58.2220">
    <property type="entry name" value="Formin, FH2 domain"/>
    <property type="match status" value="1"/>
</dbReference>
<dbReference type="InterPro" id="IPR015425">
    <property type="entry name" value="FH2_Formin"/>
</dbReference>
<dbReference type="InterPro" id="IPR042201">
    <property type="entry name" value="FH2_Formin_sf"/>
</dbReference>
<dbReference type="InterPro" id="IPR027643">
    <property type="entry name" value="Formin-like_plant"/>
</dbReference>
<dbReference type="PANTHER" id="PTHR23213:SF386">
    <property type="entry name" value="FORMIN-LIKE PROTEIN 18"/>
    <property type="match status" value="1"/>
</dbReference>
<dbReference type="PANTHER" id="PTHR23213">
    <property type="entry name" value="FORMIN-RELATED"/>
    <property type="match status" value="1"/>
</dbReference>
<dbReference type="Pfam" id="PF02181">
    <property type="entry name" value="FH2"/>
    <property type="match status" value="1"/>
</dbReference>
<dbReference type="SMART" id="SM00498">
    <property type="entry name" value="FH2"/>
    <property type="match status" value="1"/>
</dbReference>
<dbReference type="SUPFAM" id="SSF101447">
    <property type="entry name" value="Formin homology 2 domain (FH2 domain)"/>
    <property type="match status" value="1"/>
</dbReference>
<dbReference type="PROSITE" id="PS51444">
    <property type="entry name" value="FH2"/>
    <property type="match status" value="1"/>
</dbReference>
<proteinExistence type="evidence at transcript level"/>
<evidence type="ECO:0000255" key="1"/>
<evidence type="ECO:0000255" key="2">
    <source>
        <dbReference type="PROSITE-ProRule" id="PRU00774"/>
    </source>
</evidence>
<evidence type="ECO:0000256" key="3">
    <source>
        <dbReference type="SAM" id="MobiDB-lite"/>
    </source>
</evidence>
<evidence type="ECO:0000305" key="4"/>
<accession>Q6MWG9</accession>
<name>FH18_ORYSJ</name>
<gene>
    <name type="primary">FH18</name>
    <name type="ordered locus">Os04g0100300</name>
    <name type="ordered locus">LOC_Os04g01070</name>
    <name type="ORF">B1160F02.7</name>
</gene>
<protein>
    <recommendedName>
        <fullName>Formin-like protein 18</fullName>
    </recommendedName>
    <alternativeName>
        <fullName>OsFH18</fullName>
    </alternativeName>
</protein>
<comment type="subcellular location">
    <subcellularLocation>
        <location evidence="4">Membrane</location>
        <topology evidence="4">Single-pass membrane protein</topology>
    </subcellularLocation>
</comment>
<comment type="similarity">
    <text evidence="4">Belongs to the formin-like family. Class-I subfamily.</text>
</comment>
<comment type="sequence caution" evidence="4">
    <conflict type="erroneous gene model prediction">
        <sequence resource="EMBL-CDS" id="BAF13902"/>
    </conflict>
</comment>
<feature type="signal peptide" evidence="1">
    <location>
        <begin position="1"/>
        <end position="25"/>
    </location>
</feature>
<feature type="chain" id="PRO_0000319007" description="Formin-like protein 18">
    <location>
        <begin position="26"/>
        <end position="906"/>
    </location>
</feature>
<feature type="transmembrane region" description="Helical" evidence="1">
    <location>
        <begin position="120"/>
        <end position="140"/>
    </location>
</feature>
<feature type="domain" description="FH2" evidence="2">
    <location>
        <begin position="411"/>
        <end position="866"/>
    </location>
</feature>
<feature type="region of interest" description="Disordered" evidence="3">
    <location>
        <begin position="267"/>
        <end position="416"/>
    </location>
</feature>
<feature type="region of interest" description="Disordered" evidence="3">
    <location>
        <begin position="854"/>
        <end position="906"/>
    </location>
</feature>
<feature type="compositionally biased region" description="Pro residues" evidence="3">
    <location>
        <begin position="274"/>
        <end position="292"/>
    </location>
</feature>
<feature type="compositionally biased region" description="Basic residues" evidence="3">
    <location>
        <begin position="293"/>
        <end position="303"/>
    </location>
</feature>
<feature type="compositionally biased region" description="Pro residues" evidence="3">
    <location>
        <begin position="320"/>
        <end position="339"/>
    </location>
</feature>
<feature type="compositionally biased region" description="Pro residues" evidence="3">
    <location>
        <begin position="348"/>
        <end position="375"/>
    </location>
</feature>
<feature type="compositionally biased region" description="Pro residues" evidence="3">
    <location>
        <begin position="383"/>
        <end position="402"/>
    </location>
</feature>
<feature type="compositionally biased region" description="Low complexity" evidence="3">
    <location>
        <begin position="403"/>
        <end position="416"/>
    </location>
</feature>
<feature type="compositionally biased region" description="Low complexity" evidence="3">
    <location>
        <begin position="854"/>
        <end position="877"/>
    </location>
</feature>
<feature type="compositionally biased region" description="Basic and acidic residues" evidence="3">
    <location>
        <begin position="878"/>
        <end position="889"/>
    </location>
</feature>
<feature type="compositionally biased region" description="Low complexity" evidence="3">
    <location>
        <begin position="897"/>
        <end position="906"/>
    </location>
</feature>